<organism>
    <name type="scientific">Streptococcus pneumoniae (strain P1031)</name>
    <dbReference type="NCBI Taxonomy" id="488223"/>
    <lineage>
        <taxon>Bacteria</taxon>
        <taxon>Bacillati</taxon>
        <taxon>Bacillota</taxon>
        <taxon>Bacilli</taxon>
        <taxon>Lactobacillales</taxon>
        <taxon>Streptococcaceae</taxon>
        <taxon>Streptococcus</taxon>
    </lineage>
</organism>
<name>RS9_STRZP</name>
<dbReference type="EMBL" id="CP000920">
    <property type="protein sequence ID" value="ACO20275.1"/>
    <property type="molecule type" value="Genomic_DNA"/>
</dbReference>
<dbReference type="RefSeq" id="WP_000075966.1">
    <property type="nucleotide sequence ID" value="NC_012467.1"/>
</dbReference>
<dbReference type="SMR" id="C1CIH6"/>
<dbReference type="KEGG" id="spp:SPP_0345"/>
<dbReference type="HOGENOM" id="CLU_046483_2_1_9"/>
<dbReference type="GO" id="GO:0022627">
    <property type="term" value="C:cytosolic small ribosomal subunit"/>
    <property type="evidence" value="ECO:0007669"/>
    <property type="project" value="TreeGrafter"/>
</dbReference>
<dbReference type="GO" id="GO:0003723">
    <property type="term" value="F:RNA binding"/>
    <property type="evidence" value="ECO:0007669"/>
    <property type="project" value="TreeGrafter"/>
</dbReference>
<dbReference type="GO" id="GO:0003735">
    <property type="term" value="F:structural constituent of ribosome"/>
    <property type="evidence" value="ECO:0007669"/>
    <property type="project" value="InterPro"/>
</dbReference>
<dbReference type="GO" id="GO:0006412">
    <property type="term" value="P:translation"/>
    <property type="evidence" value="ECO:0007669"/>
    <property type="project" value="UniProtKB-UniRule"/>
</dbReference>
<dbReference type="FunFam" id="3.30.230.10:FF:000001">
    <property type="entry name" value="30S ribosomal protein S9"/>
    <property type="match status" value="1"/>
</dbReference>
<dbReference type="Gene3D" id="3.30.230.10">
    <property type="match status" value="1"/>
</dbReference>
<dbReference type="HAMAP" id="MF_00532_B">
    <property type="entry name" value="Ribosomal_uS9_B"/>
    <property type="match status" value="1"/>
</dbReference>
<dbReference type="InterPro" id="IPR020568">
    <property type="entry name" value="Ribosomal_Su5_D2-typ_SF"/>
</dbReference>
<dbReference type="InterPro" id="IPR000754">
    <property type="entry name" value="Ribosomal_uS9"/>
</dbReference>
<dbReference type="InterPro" id="IPR023035">
    <property type="entry name" value="Ribosomal_uS9_bac/plastid"/>
</dbReference>
<dbReference type="InterPro" id="IPR020574">
    <property type="entry name" value="Ribosomal_uS9_CS"/>
</dbReference>
<dbReference type="InterPro" id="IPR014721">
    <property type="entry name" value="Ribsml_uS5_D2-typ_fold_subgr"/>
</dbReference>
<dbReference type="NCBIfam" id="NF001099">
    <property type="entry name" value="PRK00132.1"/>
    <property type="match status" value="1"/>
</dbReference>
<dbReference type="PANTHER" id="PTHR21569">
    <property type="entry name" value="RIBOSOMAL PROTEIN S9"/>
    <property type="match status" value="1"/>
</dbReference>
<dbReference type="PANTHER" id="PTHR21569:SF1">
    <property type="entry name" value="SMALL RIBOSOMAL SUBUNIT PROTEIN US9M"/>
    <property type="match status" value="1"/>
</dbReference>
<dbReference type="Pfam" id="PF00380">
    <property type="entry name" value="Ribosomal_S9"/>
    <property type="match status" value="1"/>
</dbReference>
<dbReference type="SUPFAM" id="SSF54211">
    <property type="entry name" value="Ribosomal protein S5 domain 2-like"/>
    <property type="match status" value="1"/>
</dbReference>
<dbReference type="PROSITE" id="PS00360">
    <property type="entry name" value="RIBOSOMAL_S9"/>
    <property type="match status" value="1"/>
</dbReference>
<protein>
    <recommendedName>
        <fullName evidence="1">Small ribosomal subunit protein uS9</fullName>
    </recommendedName>
    <alternativeName>
        <fullName evidence="3">30S ribosomal protein S9</fullName>
    </alternativeName>
</protein>
<feature type="chain" id="PRO_1000146475" description="Small ribosomal subunit protein uS9">
    <location>
        <begin position="1"/>
        <end position="130"/>
    </location>
</feature>
<feature type="region of interest" description="Disordered" evidence="2">
    <location>
        <begin position="106"/>
        <end position="130"/>
    </location>
</feature>
<feature type="compositionally biased region" description="Basic residues" evidence="2">
    <location>
        <begin position="111"/>
        <end position="130"/>
    </location>
</feature>
<keyword id="KW-0687">Ribonucleoprotein</keyword>
<keyword id="KW-0689">Ribosomal protein</keyword>
<evidence type="ECO:0000255" key="1">
    <source>
        <dbReference type="HAMAP-Rule" id="MF_00532"/>
    </source>
</evidence>
<evidence type="ECO:0000256" key="2">
    <source>
        <dbReference type="SAM" id="MobiDB-lite"/>
    </source>
</evidence>
<evidence type="ECO:0000305" key="3"/>
<proteinExistence type="inferred from homology"/>
<accession>C1CIH6</accession>
<sequence length="130" mass="14248">MSQAQYAGTGRRKNAVARVRLVPGTGKITVNKKDVEEYIPHADLRLVINQPFAVTSTVGSYDVFVNVIGGGYAGQSGAIRHGIARALLQVDPDFRDSLKRAGLLTRDSRKVERKKPGLKKARKASQFSKR</sequence>
<gene>
    <name evidence="1" type="primary">rpsI</name>
    <name type="ordered locus">SPP_0345</name>
</gene>
<comment type="similarity">
    <text evidence="1">Belongs to the universal ribosomal protein uS9 family.</text>
</comment>
<reference key="1">
    <citation type="journal article" date="2010" name="Genome Biol.">
        <title>Structure and dynamics of the pan-genome of Streptococcus pneumoniae and closely related species.</title>
        <authorList>
            <person name="Donati C."/>
            <person name="Hiller N.L."/>
            <person name="Tettelin H."/>
            <person name="Muzzi A."/>
            <person name="Croucher N.J."/>
            <person name="Angiuoli S.V."/>
            <person name="Oggioni M."/>
            <person name="Dunning Hotopp J.C."/>
            <person name="Hu F.Z."/>
            <person name="Riley D.R."/>
            <person name="Covacci A."/>
            <person name="Mitchell T.J."/>
            <person name="Bentley S.D."/>
            <person name="Kilian M."/>
            <person name="Ehrlich G.D."/>
            <person name="Rappuoli R."/>
            <person name="Moxon E.R."/>
            <person name="Masignani V."/>
        </authorList>
    </citation>
    <scope>NUCLEOTIDE SEQUENCE [LARGE SCALE GENOMIC DNA]</scope>
    <source>
        <strain>P1031</strain>
    </source>
</reference>